<evidence type="ECO:0000269" key="1">
    <source>
    </source>
</evidence>
<evidence type="ECO:0000269" key="2">
    <source>
    </source>
</evidence>
<evidence type="ECO:0000269" key="3">
    <source>
    </source>
</evidence>
<evidence type="ECO:0000269" key="4">
    <source>
    </source>
</evidence>
<evidence type="ECO:0000269" key="5">
    <source>
    </source>
</evidence>
<evidence type="ECO:0000269" key="6">
    <source>
    </source>
</evidence>
<evidence type="ECO:0000269" key="7">
    <source>
    </source>
</evidence>
<evidence type="ECO:0000303" key="8">
    <source>
    </source>
</evidence>
<evidence type="ECO:0000303" key="9">
    <source>
    </source>
</evidence>
<evidence type="ECO:0000303" key="10">
    <source>
    </source>
</evidence>
<evidence type="ECO:0000305" key="11"/>
<evidence type="ECO:0000305" key="12">
    <source>
    </source>
</evidence>
<evidence type="ECO:0000305" key="13">
    <source>
    </source>
</evidence>
<evidence type="ECO:0000305" key="14">
    <source>
    </source>
</evidence>
<evidence type="ECO:0000305" key="15">
    <source>
    </source>
</evidence>
<evidence type="ECO:0000312" key="16">
    <source>
        <dbReference type="EMBL" id="AAA83421.1"/>
    </source>
</evidence>
<evidence type="ECO:0007744" key="17">
    <source>
        <dbReference type="PDB" id="1QZZ"/>
    </source>
</evidence>
<evidence type="ECO:0007744" key="18">
    <source>
        <dbReference type="PDB" id="1R00"/>
    </source>
</evidence>
<evidence type="ECO:0007744" key="19">
    <source>
        <dbReference type="PDB" id="1XDS"/>
    </source>
</evidence>
<evidence type="ECO:0007744" key="20">
    <source>
        <dbReference type="PDB" id="1XDU"/>
    </source>
</evidence>
<evidence type="ECO:0007744" key="21">
    <source>
        <dbReference type="PDB" id="7PGA"/>
    </source>
</evidence>
<evidence type="ECO:0007744" key="22">
    <source>
        <dbReference type="PDB" id="7PGJ"/>
    </source>
</evidence>
<evidence type="ECO:0007744" key="23">
    <source>
        <dbReference type="PDB" id="7PHE"/>
    </source>
</evidence>
<evidence type="ECO:0007744" key="24">
    <source>
        <dbReference type="PDB" id="9J56"/>
    </source>
</evidence>
<evidence type="ECO:0007829" key="25">
    <source>
        <dbReference type="PDB" id="1QZZ"/>
    </source>
</evidence>
<evidence type="ECO:0007829" key="26">
    <source>
        <dbReference type="PDB" id="1XDS"/>
    </source>
</evidence>
<reference key="1">
    <citation type="journal article" date="1994" name="Microbiology">
        <title>Hybrid anthracycline antibiotics: production of new anthracyclines by cloned genes from Streptomyces purpurascens in Streptomyces galilaeus.</title>
        <authorList>
            <person name="Niemi J."/>
            <person name="Ylihonko K."/>
            <person name="Hakala J."/>
            <person name="Parssinen R."/>
            <person name="Kopio A."/>
            <person name="Mantsala P."/>
        </authorList>
    </citation>
    <scope>NUCLEOTIDE SEQUENCE [GENOMIC DNA]</scope>
    <scope>FUNCTION</scope>
    <source>
        <strain>ATCC 25489 / DSM 40310 / JCM 4509 / NBRC 13077 / Maria 515</strain>
    </source>
</reference>
<reference evidence="16" key="2">
    <citation type="journal article" date="1995" name="J. Bacteriol.">
        <title>Nucleotide sequences and expression of genes from Streptomyces purpurascens that cause the production of new anthracyclines in Streptomyces galilaeus.</title>
        <authorList>
            <person name="Niemi J."/>
            <person name="Mantsala P."/>
        </authorList>
    </citation>
    <scope>NUCLEOTIDE SEQUENCE [GENOMIC DNA]</scope>
    <scope>FUNCTION</scope>
    <source>
        <strain>ATCC 25489 / DSM 40310 / JCM 4509 / NBRC 13077 / Maria 515</strain>
    </source>
</reference>
<reference key="3">
    <citation type="journal article" date="2000" name="Biochim. Biophys. Acta">
        <title>Modifications of aclacinomycin T by aclacinomycin methyl esterase (RdmC) and aclacinomycin-10-hydroxylase (RdmB) from Streptomyces purpurascens.</title>
        <authorList>
            <person name="Wang Y."/>
            <person name="Niemi J."/>
            <person name="Airas K."/>
            <person name="Ylihonko K."/>
            <person name="Hakala J."/>
            <person name="Mantsala P."/>
        </authorList>
    </citation>
    <scope>PROTEIN SEQUENCE OF 1-8</scope>
    <scope>FUNCTION</scope>
    <scope>CATALYTIC ACTIVITY</scope>
    <scope>SUBUNIT</scope>
    <source>
        <strain>ATCC 25489 / DSM 40310 / JCM 4509 / NBRC 13077 / Maria 515</strain>
    </source>
</reference>
<reference evidence="17 18" key="4">
    <citation type="journal article" date="2003" name="J. Mol. Biol.">
        <title>Crystal structure of aclacinomycin-10-hydroxylase, a S-adenosyl-L-methionine-dependent methyltransferase homolog involved in anthracycline biosynthesis in Streptomyces purpurascens.</title>
        <authorList>
            <person name="Jansson A."/>
            <person name="Niemi J."/>
            <person name="Lindqvist Y."/>
            <person name="Mantsala P."/>
            <person name="Schneider G."/>
        </authorList>
    </citation>
    <scope>X-RAY CRYSTALLOGRAPHY (2.10 ANGSTROMS) IN COMPLEXES WITH S-ADENOSYL-L-METHIONINE AND S-ADENOSYL-L-HOMOCYSTEINE</scope>
    <scope>SUBUNIT</scope>
    <scope>DOMAIN</scope>
</reference>
<reference evidence="19 20" key="5">
    <citation type="journal article" date="2005" name="J. Biol. Chem.">
        <title>Aclacinomycin 10-hydroxylase is a novel substrate-assisted hydroxylase requiring S-adenosyl-L-methionine as cofactor.</title>
        <authorList>
            <person name="Jansson A."/>
            <person name="Koskiniemi H."/>
            <person name="Erola A."/>
            <person name="Wang J."/>
            <person name="Mantsala P."/>
            <person name="Schneider G."/>
            <person name="Niemi J."/>
        </authorList>
    </citation>
    <scope>X-RAY CRYSTALLOGRAPHY (2.30 ANGSTROMS) IN COMPLEXES WITH S-ADENOSYL-L-METHIONINE; 11-DEOXY-BETA-RHODOMYCIN AND SINEFUNGIN</scope>
    <scope>FUNCTION</scope>
    <scope>CATALYTIC ACTIVITY</scope>
    <scope>ACTIVITY REGULATION</scope>
    <scope>REACTION MECHANISM</scope>
    <scope>SUBUNIT</scope>
    <scope>DOMAIN</scope>
    <scope>MUTAGENESIS OF CYS-165</scope>
</reference>
<reference evidence="21 22 23" key="6">
    <citation type="journal article" date="2023" name="PNAS Nexus">
        <title>Evolution-inspired engineering of anthracycline methyltransferases.</title>
        <authorList>
            <person name="Dinis P."/>
            <person name="Tirkkonen H."/>
            <person name="Wandi B.N."/>
            <person name="Siitonen V."/>
            <person name="Niemi J."/>
            <person name="Grocholski T."/>
            <person name="Metsa-Ketela M."/>
        </authorList>
    </citation>
    <scope>X-RAY CRYSTALLOGRAPHY (2.13 ANGSTROMS) OF 290-309</scope>
    <scope>FUNCTION AS A 10-HYDROXYLASE</scope>
    <scope>ENZYME EVOLUTION</scope>
</reference>
<reference evidence="24" key="7">
    <citation type="journal article" date="2025" name="Synth. Syst. Biotechnol.">
        <title>Functional investigation of the SAM-dependent methyltransferase RdmB in anthracycline biosynthesis.</title>
        <authorList>
            <person name="Sang M."/>
            <person name="Yang Q."/>
            <person name="Guo J."/>
            <person name="Feng P."/>
            <person name="Ma W."/>
            <person name="Zhang W."/>
        </authorList>
    </citation>
    <scope>X-RAY CRYSTALLOGRAPHY (2.10 ANGSTROMS) IN COMPLEX WITH S-ADENOSYL-L-HOMOCYSTEINE</scope>
    <scope>FUNCTION</scope>
    <scope>CATALYTIC ACTIVITY</scope>
    <scope>ACTIVITY REGULATION</scope>
    <scope>BIOPHYSICOCHEMICAL PROPERTIES</scope>
    <scope>SUBUNIT</scope>
    <scope>MUTAGENESIS OF 190-GLY--GLY-194; ASN-260 AND ARG-307</scope>
</reference>
<keyword id="KW-0002">3D-structure</keyword>
<keyword id="KW-0045">Antibiotic biosynthesis</keyword>
<keyword id="KW-0903">Direct protein sequencing</keyword>
<keyword id="KW-0456">Lyase</keyword>
<keyword id="KW-0489">Methyltransferase</keyword>
<keyword id="KW-0949">S-adenosyl-L-methionine</keyword>
<keyword id="KW-0808">Transferase</keyword>
<protein>
    <recommendedName>
        <fullName evidence="8">Aclacinomycin 10-hydroxylase RdmB</fullName>
        <ecNumber evidence="1 3 5">4.1.1.-</ecNumber>
    </recommendedName>
    <alternativeName>
        <fullName>15-demethoxy-epsilon-rhodomycin 10-hydroxylase</fullName>
    </alternativeName>
    <alternativeName>
        <fullName evidence="9">SAM-dependent methyltransferase RdmB</fullName>
        <ecNumber evidence="5">2.1.1.-</ecNumber>
    </alternativeName>
</protein>
<organism>
    <name type="scientific">Streptomyces purpurascens</name>
    <dbReference type="NCBI Taxonomy" id="1924"/>
    <lineage>
        <taxon>Bacteria</taxon>
        <taxon>Bacillati</taxon>
        <taxon>Actinomycetota</taxon>
        <taxon>Actinomycetes</taxon>
        <taxon>Kitasatosporales</taxon>
        <taxon>Streptomycetaceae</taxon>
        <taxon>Streptomyces</taxon>
    </lineage>
</organism>
<comment type="function">
    <text evidence="1 3 4 5 6 7">Involved in the biosynthesis of anthracyclines, an important group of aromatic polyketide antibiotics used in cancer chemotherapy (PubMed:11004563, PubMed:15548527, PubMed:7751313, PubMed:8081500). Acts as a 10-hydroxylase to catalyze a decarboxylative hydroxylation reaction on anthracyclines (PubMed:11004563, PubMed:15548527, PubMed:36874276, PubMed:39308748). During biosynthesis of rhodomycin, it catalyzes the removal of the carboxylic group at the C-10 position of 15-demethoxy-epsilon-rhodomycin coupled to hydroxylation at the same C-10 position to yield beta-rhodomycin (PubMed:15548527). In vitro, can also catalyze the removal of the carboxylic group at the C-10 position of 15-demethoxyaclacinomycin T coupled to hydroxylation at the same C-10 position to yield 10-decarboxymethylaclacinomycin T (PubMed:11004563). It can also use 10-carboxy-13-deoxycarminomycin, an analog of 15-demethoxy-epsilon-rhodomycin, to yield 10-hydroxy-13-deoxycarminomycin (PubMed:39308748).</text>
</comment>
<comment type="function">
    <text evidence="5">In addition to its hydroxylation activity, it can act in vitro as a S-adenosyl-L-methionine-dependent O-methyltransferase and catalyze the 4-O-methylation of 10-hydroxy-13-deoxycarminomycin to 10-hydroxy-13-deoxydaunorubicin (PubMed:39308748). The triglycosyl group of anthracyclines prevents the methylation reaction (PubMed:39308748).</text>
</comment>
<comment type="catalytic activity">
    <reaction evidence="1">
        <text>15-demethylaclacinomycin T + AH2 + O2 = 10-decarboxymethylaclacinomycin T + A + CO2 + H2O</text>
        <dbReference type="Rhea" id="RHEA:45800"/>
        <dbReference type="ChEBI" id="CHEBI:13193"/>
        <dbReference type="ChEBI" id="CHEBI:15377"/>
        <dbReference type="ChEBI" id="CHEBI:15379"/>
        <dbReference type="ChEBI" id="CHEBI:16526"/>
        <dbReference type="ChEBI" id="CHEBI:17499"/>
        <dbReference type="ChEBI" id="CHEBI:74354"/>
        <dbReference type="ChEBI" id="CHEBI:85430"/>
    </reaction>
    <physiologicalReaction direction="left-to-right" evidence="1">
        <dbReference type="Rhea" id="RHEA:45801"/>
    </physiologicalReaction>
</comment>
<comment type="catalytic activity">
    <reaction evidence="5">
        <text>10-carboxy-13-deoxycarminomycin + AH2 + O2 + H(+) = 10-hydroxy-13-deoxycarminomycin + A + CO2 + H2O</text>
        <dbReference type="Rhea" id="RHEA:82579"/>
        <dbReference type="ChEBI" id="CHEBI:13193"/>
        <dbReference type="ChEBI" id="CHEBI:15377"/>
        <dbReference type="ChEBI" id="CHEBI:15378"/>
        <dbReference type="ChEBI" id="CHEBI:15379"/>
        <dbReference type="ChEBI" id="CHEBI:16526"/>
        <dbReference type="ChEBI" id="CHEBI:17499"/>
        <dbReference type="ChEBI" id="CHEBI:77077"/>
        <dbReference type="ChEBI" id="CHEBI:232397"/>
    </reaction>
</comment>
<comment type="catalytic activity">
    <reaction evidence="5">
        <text>10-hydroxy-13-deoxycarminomycin + S-adenosyl-L-methionine = 10-hydroxy-13-deoxydaunorubicin + S-adenosyl-L-homocysteine + H(+)</text>
        <dbReference type="Rhea" id="RHEA:82583"/>
        <dbReference type="ChEBI" id="CHEBI:15378"/>
        <dbReference type="ChEBI" id="CHEBI:57856"/>
        <dbReference type="ChEBI" id="CHEBI:59789"/>
        <dbReference type="ChEBI" id="CHEBI:232397"/>
        <dbReference type="ChEBI" id="CHEBI:232398"/>
    </reaction>
</comment>
<comment type="activity regulation">
    <text evidence="3 5">The hydroxylation reaction requires S-adenosyl-L-methionine (SAM) as a cofactor (PubMed:15548527, PubMed:39308748). S-adenosine-L-homocysteine and sinefungin (a SAM analog) can also support the decarboxylative hydroxylation activity with 10-carboxy-13-deoxycarminomycin as substrate (PubMed:39308748). SAM and its analogs are considered an essential structural ligand to maintain ternary structural integrity and the proper binding mode and orientation of electron-rich substrates during decarboxylative hydroxylation of C-10 by RdmB (PubMed:39308748).</text>
</comment>
<comment type="biophysicochemical properties">
    <kinetics>
        <KM evidence="5">12.02 uM for 10-carboxy-13-deoxycarminomycin</KM>
        <text evidence="5">kcat is 566.7 min(-1) with 10-carboxy-13-deoxycarminomycin as substrate.</text>
    </kinetics>
</comment>
<comment type="pathway">
    <text evidence="13 14">Antibiotic biosynthesis; rhodomycin biosynthesis.</text>
</comment>
<comment type="pathway">
    <text evidence="12">Antibiotic biosynthesis; aclacinomycin biosynthesis.</text>
</comment>
<comment type="subunit">
    <text evidence="1 2 3 5">Homodimer (PubMed:14607118, PubMed:15548527, PubMed:39308748). Homotetramer in solution (PubMed:11004563). Tetramers might not be very stable in solution (PubMed:14607118).</text>
</comment>
<comment type="domain">
    <text evidence="2 3">Contains an N-terminal domain involved in dimerization, a middle domain and C-terminal catalytic domain that binds S-adenosyl-L-methionine.</text>
</comment>
<comment type="similarity">
    <text evidence="11">Belongs to the class I-like SAM-binding methyltransferase superfamily. Cation-independent O-methyltransferase family.</text>
</comment>
<name>RDMB_STREF</name>
<dbReference type="EC" id="4.1.1.-" evidence="1 3 5"/>
<dbReference type="EC" id="2.1.1.-" evidence="5"/>
<dbReference type="EMBL" id="U10405">
    <property type="protein sequence ID" value="AAA83421.1"/>
    <property type="molecule type" value="Genomic_DNA"/>
</dbReference>
<dbReference type="RefSeq" id="WP_189725816.1">
    <property type="nucleotide sequence ID" value="NZ_BMUK01000008.1"/>
</dbReference>
<dbReference type="PDB" id="1QZZ">
    <property type="method" value="X-ray"/>
    <property type="resolution" value="2.10 A"/>
    <property type="chains" value="A=1-374"/>
</dbReference>
<dbReference type="PDB" id="1R00">
    <property type="method" value="X-ray"/>
    <property type="resolution" value="2.50 A"/>
    <property type="chains" value="A=1-374"/>
</dbReference>
<dbReference type="PDB" id="1XDS">
    <property type="method" value="X-ray"/>
    <property type="resolution" value="2.30 A"/>
    <property type="chains" value="A/B=1-374"/>
</dbReference>
<dbReference type="PDB" id="1XDU">
    <property type="method" value="X-ray"/>
    <property type="resolution" value="2.70 A"/>
    <property type="chains" value="A=1-374"/>
</dbReference>
<dbReference type="PDB" id="7PGA">
    <property type="method" value="X-ray"/>
    <property type="resolution" value="2.77 A"/>
    <property type="chains" value="A/B/C/D=290-309"/>
</dbReference>
<dbReference type="PDB" id="7PGJ">
    <property type="method" value="X-ray"/>
    <property type="resolution" value="2.13 A"/>
    <property type="chains" value="A=290-309"/>
</dbReference>
<dbReference type="PDB" id="7PHE">
    <property type="method" value="X-ray"/>
    <property type="resolution" value="2.32 A"/>
    <property type="chains" value="A/B=290-309"/>
</dbReference>
<dbReference type="PDB" id="9J56">
    <property type="method" value="X-ray"/>
    <property type="resolution" value="2.10 A"/>
    <property type="chains" value="A/B=1-374"/>
</dbReference>
<dbReference type="PDBsum" id="1QZZ"/>
<dbReference type="PDBsum" id="1R00"/>
<dbReference type="PDBsum" id="1XDS"/>
<dbReference type="PDBsum" id="1XDU"/>
<dbReference type="PDBsum" id="7PGA"/>
<dbReference type="PDBsum" id="7PGJ"/>
<dbReference type="PDBsum" id="7PHE"/>
<dbReference type="PDBsum" id="9J56"/>
<dbReference type="SMR" id="Q54527"/>
<dbReference type="DrugBank" id="DB03219">
    <property type="generic name" value="11-Deoxy-Beta-Rhodomycin"/>
</dbReference>
<dbReference type="DrugBank" id="DB01752">
    <property type="generic name" value="S-adenosyl-L-homocysteine"/>
</dbReference>
<dbReference type="DrugBank" id="DB01910">
    <property type="generic name" value="Sinefungin"/>
</dbReference>
<dbReference type="KEGG" id="ag:AAA83421"/>
<dbReference type="BioCyc" id="MetaCyc:MONOMER-18185"/>
<dbReference type="UniPathway" id="UPA01042"/>
<dbReference type="UniPathway" id="UPA01043"/>
<dbReference type="EvolutionaryTrace" id="Q54527"/>
<dbReference type="GO" id="GO:0016831">
    <property type="term" value="F:carboxy-lyase activity"/>
    <property type="evidence" value="ECO:0000314"/>
    <property type="project" value="UniProtKB"/>
</dbReference>
<dbReference type="GO" id="GO:0008171">
    <property type="term" value="F:O-methyltransferase activity"/>
    <property type="evidence" value="ECO:0007669"/>
    <property type="project" value="InterPro"/>
</dbReference>
<dbReference type="GO" id="GO:0046983">
    <property type="term" value="F:protein dimerization activity"/>
    <property type="evidence" value="ECO:0007669"/>
    <property type="project" value="InterPro"/>
</dbReference>
<dbReference type="GO" id="GO:0017000">
    <property type="term" value="P:antibiotic biosynthetic process"/>
    <property type="evidence" value="ECO:0007669"/>
    <property type="project" value="UniProtKB-KW"/>
</dbReference>
<dbReference type="CDD" id="cd02440">
    <property type="entry name" value="AdoMet_MTases"/>
    <property type="match status" value="1"/>
</dbReference>
<dbReference type="FunFam" id="1.10.10.10:FF:001051">
    <property type="entry name" value="Carminomycin 4-O-methyltransferase DnrK"/>
    <property type="match status" value="1"/>
</dbReference>
<dbReference type="FunFam" id="3.40.50.150:FF:000405">
    <property type="entry name" value="Carminomycin 4-O-methyltransferase DnrK"/>
    <property type="match status" value="1"/>
</dbReference>
<dbReference type="Gene3D" id="1.10.287.1350">
    <property type="match status" value="1"/>
</dbReference>
<dbReference type="Gene3D" id="3.40.50.150">
    <property type="entry name" value="Vaccinia Virus protein VP39"/>
    <property type="match status" value="1"/>
</dbReference>
<dbReference type="Gene3D" id="1.10.10.10">
    <property type="entry name" value="Winged helix-like DNA-binding domain superfamily/Winged helix DNA-binding domain"/>
    <property type="match status" value="1"/>
</dbReference>
<dbReference type="InterPro" id="IPR016461">
    <property type="entry name" value="COMT-like"/>
</dbReference>
<dbReference type="InterPro" id="IPR001077">
    <property type="entry name" value="O_MeTrfase_dom"/>
</dbReference>
<dbReference type="InterPro" id="IPR012967">
    <property type="entry name" value="Plant_O-MeTrfase_dimerisation"/>
</dbReference>
<dbReference type="InterPro" id="IPR029063">
    <property type="entry name" value="SAM-dependent_MTases_sf"/>
</dbReference>
<dbReference type="InterPro" id="IPR036388">
    <property type="entry name" value="WH-like_DNA-bd_sf"/>
</dbReference>
<dbReference type="InterPro" id="IPR036390">
    <property type="entry name" value="WH_DNA-bd_sf"/>
</dbReference>
<dbReference type="PANTHER" id="PTHR43712:SF2">
    <property type="entry name" value="O-METHYLTRANSFERASE CICE"/>
    <property type="match status" value="1"/>
</dbReference>
<dbReference type="PANTHER" id="PTHR43712">
    <property type="entry name" value="PUTATIVE (AFU_ORTHOLOGUE AFUA_4G14580)-RELATED"/>
    <property type="match status" value="1"/>
</dbReference>
<dbReference type="Pfam" id="PF08100">
    <property type="entry name" value="Dimerisation"/>
    <property type="match status" value="1"/>
</dbReference>
<dbReference type="Pfam" id="PF00891">
    <property type="entry name" value="Methyltransf_2"/>
    <property type="match status" value="1"/>
</dbReference>
<dbReference type="PIRSF" id="PIRSF005739">
    <property type="entry name" value="O-mtase"/>
    <property type="match status" value="1"/>
</dbReference>
<dbReference type="SUPFAM" id="SSF53335">
    <property type="entry name" value="S-adenosyl-L-methionine-dependent methyltransferases"/>
    <property type="match status" value="1"/>
</dbReference>
<dbReference type="SUPFAM" id="SSF46785">
    <property type="entry name" value="Winged helix' DNA-binding domain"/>
    <property type="match status" value="1"/>
</dbReference>
<dbReference type="PROSITE" id="PS51683">
    <property type="entry name" value="SAM_OMT_II"/>
    <property type="match status" value="1"/>
</dbReference>
<gene>
    <name evidence="10" type="primary">rdmB</name>
</gene>
<proteinExistence type="evidence at protein level"/>
<accession>Q54527</accession>
<sequence>MSSSSPGEPLEPTDQDLDVLLKNLGNLVTPMALRVAATLRLVDHLLAGADTLAGLADRTDTHPQALSRLVRHLTVVGVLEGGEKQGRPLRPTRLGMLLADGHPAQQRAWLDLNGAVSHADLAFTGLLDVVRTGRPAYAGRYGRPFWEDLSADVALADSFDALMSCDEDLAYEAPADAYDWSAVRHVLDVGGGNGGMLAAIALRAPHLRGTLVELAGPAERARRRFADAGLADRVTVAEGDFFKPLPVTADVVLLSFVLLNWSDEDALTILRGCVRALEPGGRLLVLDRADVEGDGADRFFSTLLDLRMLTFMGGRVRTRDEVVDLAGSAGLALASERTSGSTTLPFDFSILEFTAVSEEAAPAAQASEALPAQE</sequence>
<feature type="chain" id="PRO_0000425720" description="Aclacinomycin 10-hydroxylase RdmB">
    <location>
        <begin position="1"/>
        <end position="374"/>
    </location>
</feature>
<feature type="binding site" evidence="2 17 18">
    <location>
        <position position="171"/>
    </location>
    <ligand>
        <name>S-adenosyl-L-methionine</name>
        <dbReference type="ChEBI" id="CHEBI:59789"/>
    </ligand>
</feature>
<feature type="binding site" evidence="2 3 17 18 19">
    <location>
        <position position="190"/>
    </location>
    <ligand>
        <name>S-adenosyl-L-methionine</name>
        <dbReference type="ChEBI" id="CHEBI:59789"/>
    </ligand>
</feature>
<feature type="binding site" evidence="2 3 17 18 19">
    <location>
        <position position="213"/>
    </location>
    <ligand>
        <name>S-adenosyl-L-methionine</name>
        <dbReference type="ChEBI" id="CHEBI:59789"/>
    </ligand>
</feature>
<feature type="binding site" evidence="2 3 17 18 19">
    <location>
        <position position="240"/>
    </location>
    <ligand>
        <name>S-adenosyl-L-methionine</name>
        <dbReference type="ChEBI" id="CHEBI:59789"/>
    </ligand>
</feature>
<feature type="binding site" evidence="2 3 17 18 19">
    <location>
        <position position="241"/>
    </location>
    <ligand>
        <name>S-adenosyl-L-methionine</name>
        <dbReference type="ChEBI" id="CHEBI:59789"/>
    </ligand>
</feature>
<feature type="binding site" evidence="2 3 17 18 19">
    <location>
        <position position="255"/>
    </location>
    <ligand>
        <name>S-adenosyl-L-methionine</name>
        <dbReference type="ChEBI" id="CHEBI:59789"/>
    </ligand>
</feature>
<feature type="site" description="Required for 4-O-methylation activity" evidence="15">
    <location>
        <position position="260"/>
    </location>
</feature>
<feature type="site" description="Required for 10-decarboxylative hydroxylation activity" evidence="15">
    <location>
        <position position="307"/>
    </location>
</feature>
<feature type="mutagenesis site" description="Approximately equally active as the native enzyme." evidence="3">
    <original>C</original>
    <variation>S</variation>
    <location>
        <position position="165"/>
    </location>
</feature>
<feature type="mutagenesis site" description="Completely abolishes both the methylation and hydroxylation activities with 10-carboxy-13-deoxycarminomycin." evidence="5">
    <original>GGGNG</original>
    <variation>AGANA</variation>
    <location>
        <begin position="190"/>
        <end position="194"/>
    </location>
</feature>
<feature type="mutagenesis site" description="Does not affect hydroxylation of 10-carboxy-13-deoxycarminomycin but abolishes the methylation activity." evidence="5">
    <original>N</original>
    <variation>A</variation>
    <location>
        <position position="260"/>
    </location>
</feature>
<feature type="mutagenesis site" description="Abolishes hydroxylation of 10-carboxy-13-deoxycarminomycin." evidence="5">
    <original>R</original>
    <variation>A</variation>
    <location>
        <position position="307"/>
    </location>
</feature>
<feature type="helix" evidence="25">
    <location>
        <begin position="14"/>
        <end position="22"/>
    </location>
</feature>
<feature type="turn" evidence="25">
    <location>
        <begin position="23"/>
        <end position="25"/>
    </location>
</feature>
<feature type="helix" evidence="25">
    <location>
        <begin position="28"/>
        <end position="38"/>
    </location>
</feature>
<feature type="helix" evidence="25">
    <location>
        <begin position="41"/>
        <end position="46"/>
    </location>
</feature>
<feature type="helix" evidence="25">
    <location>
        <begin position="52"/>
        <end position="59"/>
    </location>
</feature>
<feature type="helix" evidence="25">
    <location>
        <begin position="63"/>
        <end position="75"/>
    </location>
</feature>
<feature type="strand" evidence="25">
    <location>
        <begin position="78"/>
        <end position="80"/>
    </location>
</feature>
<feature type="helix" evidence="25">
    <location>
        <begin position="95"/>
        <end position="98"/>
    </location>
</feature>
<feature type="helix" evidence="25">
    <location>
        <begin position="106"/>
        <end position="110"/>
    </location>
</feature>
<feature type="helix" evidence="25">
    <location>
        <begin position="115"/>
        <end position="120"/>
    </location>
</feature>
<feature type="helix" evidence="25">
    <location>
        <begin position="121"/>
        <end position="125"/>
    </location>
</feature>
<feature type="helix" evidence="25">
    <location>
        <begin position="126"/>
        <end position="132"/>
    </location>
</feature>
<feature type="helix" evidence="25">
    <location>
        <begin position="137"/>
        <end position="141"/>
    </location>
</feature>
<feature type="helix" evidence="25">
    <location>
        <begin position="145"/>
        <end position="151"/>
    </location>
</feature>
<feature type="helix" evidence="25">
    <location>
        <begin position="153"/>
        <end position="161"/>
    </location>
</feature>
<feature type="helix" evidence="25">
    <location>
        <begin position="164"/>
        <end position="166"/>
    </location>
</feature>
<feature type="turn" evidence="25">
    <location>
        <begin position="168"/>
        <end position="171"/>
    </location>
</feature>
<feature type="helix" evidence="25">
    <location>
        <begin position="172"/>
        <end position="176"/>
    </location>
</feature>
<feature type="strand" evidence="25">
    <location>
        <begin position="185"/>
        <end position="189"/>
    </location>
</feature>
<feature type="helix" evidence="25">
    <location>
        <begin position="195"/>
        <end position="203"/>
    </location>
</feature>
<feature type="strand" evidence="25">
    <location>
        <begin position="208"/>
        <end position="213"/>
    </location>
</feature>
<feature type="helix" evidence="25">
    <location>
        <begin position="215"/>
        <end position="227"/>
    </location>
</feature>
<feature type="turn" evidence="25">
    <location>
        <begin position="231"/>
        <end position="233"/>
    </location>
</feature>
<feature type="strand" evidence="25">
    <location>
        <begin position="234"/>
        <end position="238"/>
    </location>
</feature>
<feature type="strand" evidence="25">
    <location>
        <begin position="249"/>
        <end position="256"/>
    </location>
</feature>
<feature type="helix" evidence="25">
    <location>
        <begin position="258"/>
        <end position="260"/>
    </location>
</feature>
<feature type="helix" evidence="25">
    <location>
        <begin position="263"/>
        <end position="276"/>
    </location>
</feature>
<feature type="strand" evidence="25">
    <location>
        <begin position="277"/>
        <end position="287"/>
    </location>
</feature>
<feature type="helix" evidence="25">
    <location>
        <begin position="297"/>
        <end position="312"/>
    </location>
</feature>
<feature type="helix" evidence="25">
    <location>
        <begin position="319"/>
        <end position="327"/>
    </location>
</feature>
<feature type="turn" evidence="25">
    <location>
        <begin position="328"/>
        <end position="330"/>
    </location>
</feature>
<feature type="strand" evidence="25">
    <location>
        <begin position="331"/>
        <end position="339"/>
    </location>
</feature>
<feature type="strand" evidence="26">
    <location>
        <begin position="342"/>
        <end position="345"/>
    </location>
</feature>
<feature type="strand" evidence="25">
    <location>
        <begin position="348"/>
        <end position="355"/>
    </location>
</feature>